<reference key="1">
    <citation type="journal article" date="2001" name="Nature">
        <title>Genome sequence and gene compaction of the eukaryote parasite Encephalitozoon cuniculi.</title>
        <authorList>
            <person name="Katinka M.D."/>
            <person name="Duprat S."/>
            <person name="Cornillot E."/>
            <person name="Metenier G."/>
            <person name="Thomarat F."/>
            <person name="Prensier G."/>
            <person name="Barbe V."/>
            <person name="Peyretaillade E."/>
            <person name="Brottier P."/>
            <person name="Wincker P."/>
            <person name="Delbac F."/>
            <person name="El Alaoui H."/>
            <person name="Peyret P."/>
            <person name="Saurin W."/>
            <person name="Gouy M."/>
            <person name="Weissenbach J."/>
            <person name="Vivares C.P."/>
        </authorList>
    </citation>
    <scope>NUCLEOTIDE SEQUENCE [LARGE SCALE GENOMIC DNA]</scope>
    <source>
        <strain>GB-M1</strain>
    </source>
</reference>
<reference key="2">
    <citation type="journal article" date="2006" name="Proteomics">
        <title>Proteomic analysis of the eukaryotic parasite Encephalitozoon cuniculi (microsporidia): a reference map for proteins expressed in late sporogonial stages.</title>
        <authorList>
            <person name="Brosson D."/>
            <person name="Kuhn L."/>
            <person name="Delbac F."/>
            <person name="Garin J."/>
            <person name="Vivares C.P."/>
            <person name="Texier C."/>
        </authorList>
    </citation>
    <scope>IDENTIFICATION BY MASS SPECTROMETRY [LARGE SCALE ANALYSIS]</scope>
    <scope>DEVELOPMENTAL STAGE</scope>
</reference>
<gene>
    <name type="primary">RVB1</name>
    <name type="ordered locus">ECU09_1390</name>
</gene>
<evidence type="ECO:0000250" key="1"/>
<evidence type="ECO:0000269" key="2">
    <source>
    </source>
</evidence>
<evidence type="ECO:0000305" key="3"/>
<sequence>MVKSSNIAIHSHVRSLGLDDCGNPVEKPDAVIGQENAREAAGLIVEMVRTKRMSGRAVLISGPVGSGKTALAVGISEELGAGTPFTSMSGSEVYSNEVKKTEVLEEALRRSILVRMRELKDVYEGEVVELRIVDEENPLSSYPKRIKEMFVILKTSKESKKLKLAPSLYEQIDKQRIVNGDVVYIEVNSGVIKKLGRSEAHMNDFDLEADTYVPIPKGEVLKRKEVMQSVTLHDLDMANARPSGQDMLSLVFRILSPRKTEITERLRGDVNRMVNGYLENGNAEIVPGVLFIDEVHMLDVECFTFLHKVIESPLSPTIIFASNKGMAPIKGSDGLLGPFGITKDLLDRIVIISVKRNPDEANREIIRRRMKEEGLEMDDDAFGFFVGLSTSRSLRYCISLIPLLKTYGGCVSVRNVEEVAELFHDS</sequence>
<comment type="function">
    <text evidence="1">DNA helicase which participates in several chromatin remodeling complexes, including the SWR1 and the INO80 complexes. The SWR1 complex mediates the ATP-dependent exchange of histone H2A for the H2A variant HZT1 leading to transcriptional regulation of selected genes by chromatin remodeling. The INO80 complex remodels chromatin by shifting nucleosomes and is involved in DNA repair. Also involved in pre-rRNA processing (By similarity).</text>
</comment>
<comment type="catalytic activity">
    <reaction>
        <text>ATP + H2O = ADP + phosphate + H(+)</text>
        <dbReference type="Rhea" id="RHEA:13065"/>
        <dbReference type="ChEBI" id="CHEBI:15377"/>
        <dbReference type="ChEBI" id="CHEBI:15378"/>
        <dbReference type="ChEBI" id="CHEBI:30616"/>
        <dbReference type="ChEBI" id="CHEBI:43474"/>
        <dbReference type="ChEBI" id="CHEBI:456216"/>
        <dbReference type="EC" id="3.6.4.12"/>
    </reaction>
</comment>
<comment type="subunit">
    <text evidence="1">Component of the SWR1 chromatin remodeling complex, the INO80 chromatin remodeling complex, and of the R2TP complex.</text>
</comment>
<comment type="subcellular location">
    <subcellularLocation>
        <location evidence="1">Nucleus</location>
    </subcellularLocation>
</comment>
<comment type="developmental stage">
    <text evidence="2">Expressed in late sporogonial stages.</text>
</comment>
<comment type="similarity">
    <text evidence="3">Belongs to the RuvB family.</text>
</comment>
<feature type="chain" id="PRO_0000381758" description="RuvB-like protein 1">
    <location>
        <begin position="1"/>
        <end position="426"/>
    </location>
</feature>
<feature type="binding site" evidence="1">
    <location>
        <begin position="62"/>
        <end position="69"/>
    </location>
    <ligand>
        <name>ATP</name>
        <dbReference type="ChEBI" id="CHEBI:30616"/>
    </ligand>
</feature>
<dbReference type="EC" id="3.6.4.12"/>
<dbReference type="EMBL" id="AL590451">
    <property type="protein sequence ID" value="CAD27111.1"/>
    <property type="molecule type" value="Genomic_DNA"/>
</dbReference>
<dbReference type="RefSeq" id="XP_955692.1">
    <property type="nucleotide sequence ID" value="XM_950599.1"/>
</dbReference>
<dbReference type="SMR" id="Q8STP2"/>
<dbReference type="FunCoup" id="Q8STP2">
    <property type="interactions" value="319"/>
</dbReference>
<dbReference type="STRING" id="284813.Q8STP2"/>
<dbReference type="VEuPathDB" id="MicrosporidiaDB:ECU09_1390"/>
<dbReference type="HOGENOM" id="CLU_028311_1_1_1"/>
<dbReference type="InParanoid" id="Q8STP2"/>
<dbReference type="OMA" id="AMGICGQ"/>
<dbReference type="OrthoDB" id="10060499at2759"/>
<dbReference type="Proteomes" id="UP000000819">
    <property type="component" value="Chromosome IX"/>
</dbReference>
<dbReference type="GO" id="GO:0005634">
    <property type="term" value="C:nucleus"/>
    <property type="evidence" value="ECO:0007669"/>
    <property type="project" value="UniProtKB-SubCell"/>
</dbReference>
<dbReference type="GO" id="GO:0005524">
    <property type="term" value="F:ATP binding"/>
    <property type="evidence" value="ECO:0007669"/>
    <property type="project" value="UniProtKB-KW"/>
</dbReference>
<dbReference type="GO" id="GO:0016887">
    <property type="term" value="F:ATP hydrolysis activity"/>
    <property type="evidence" value="ECO:0007669"/>
    <property type="project" value="InterPro"/>
</dbReference>
<dbReference type="GO" id="GO:0008094">
    <property type="term" value="F:ATP-dependent activity, acting on DNA"/>
    <property type="evidence" value="ECO:0007669"/>
    <property type="project" value="InterPro"/>
</dbReference>
<dbReference type="GO" id="GO:0004386">
    <property type="term" value="F:helicase activity"/>
    <property type="evidence" value="ECO:0007669"/>
    <property type="project" value="UniProtKB-KW"/>
</dbReference>
<dbReference type="GO" id="GO:0006325">
    <property type="term" value="P:chromatin organization"/>
    <property type="evidence" value="ECO:0007669"/>
    <property type="project" value="UniProtKB-KW"/>
</dbReference>
<dbReference type="GO" id="GO:0006281">
    <property type="term" value="P:DNA repair"/>
    <property type="evidence" value="ECO:0007669"/>
    <property type="project" value="UniProtKB-KW"/>
</dbReference>
<dbReference type="FunFam" id="2.40.50.360:FF:000001">
    <property type="entry name" value="RuvB-like helicase"/>
    <property type="match status" value="1"/>
</dbReference>
<dbReference type="Gene3D" id="1.10.8.60">
    <property type="match status" value="1"/>
</dbReference>
<dbReference type="Gene3D" id="3.40.50.300">
    <property type="entry name" value="P-loop containing nucleotide triphosphate hydrolases"/>
    <property type="match status" value="1"/>
</dbReference>
<dbReference type="Gene3D" id="2.40.50.360">
    <property type="entry name" value="RuvB-like helicase, domain II"/>
    <property type="match status" value="1"/>
</dbReference>
<dbReference type="InterPro" id="IPR003593">
    <property type="entry name" value="AAA+_ATPase"/>
</dbReference>
<dbReference type="InterPro" id="IPR012340">
    <property type="entry name" value="NA-bd_OB-fold"/>
</dbReference>
<dbReference type="InterPro" id="IPR027417">
    <property type="entry name" value="P-loop_NTPase"/>
</dbReference>
<dbReference type="InterPro" id="IPR027238">
    <property type="entry name" value="RuvB-like"/>
</dbReference>
<dbReference type="InterPro" id="IPR041048">
    <property type="entry name" value="RuvB-like_C"/>
</dbReference>
<dbReference type="InterPro" id="IPR042487">
    <property type="entry name" value="RuvBL1/2_DNA/RNA_bd_dom"/>
</dbReference>
<dbReference type="InterPro" id="IPR010339">
    <property type="entry name" value="TIP49_P-loop"/>
</dbReference>
<dbReference type="PANTHER" id="PTHR11093">
    <property type="entry name" value="RUVB-RELATED REPTIN AND PONTIN"/>
    <property type="match status" value="1"/>
</dbReference>
<dbReference type="Pfam" id="PF06068">
    <property type="entry name" value="TIP49"/>
    <property type="match status" value="1"/>
</dbReference>
<dbReference type="Pfam" id="PF17856">
    <property type="entry name" value="TIP49_C"/>
    <property type="match status" value="1"/>
</dbReference>
<dbReference type="SMART" id="SM00382">
    <property type="entry name" value="AAA"/>
    <property type="match status" value="1"/>
</dbReference>
<dbReference type="SUPFAM" id="SSF50249">
    <property type="entry name" value="Nucleic acid-binding proteins"/>
    <property type="match status" value="1"/>
</dbReference>
<dbReference type="SUPFAM" id="SSF52540">
    <property type="entry name" value="P-loop containing nucleoside triphosphate hydrolases"/>
    <property type="match status" value="1"/>
</dbReference>
<keyword id="KW-0010">Activator</keyword>
<keyword id="KW-0067">ATP-binding</keyword>
<keyword id="KW-0156">Chromatin regulator</keyword>
<keyword id="KW-0227">DNA damage</keyword>
<keyword id="KW-0234">DNA repair</keyword>
<keyword id="KW-0347">Helicase</keyword>
<keyword id="KW-0378">Hydrolase</keyword>
<keyword id="KW-0547">Nucleotide-binding</keyword>
<keyword id="KW-0539">Nucleus</keyword>
<keyword id="KW-1185">Reference proteome</keyword>
<keyword id="KW-0804">Transcription</keyword>
<keyword id="KW-0805">Transcription regulation</keyword>
<protein>
    <recommendedName>
        <fullName>RuvB-like protein 1</fullName>
        <shortName>RUVBL1</shortName>
        <ecNumber>3.6.4.12</ecNumber>
    </recommendedName>
    <alternativeName>
        <fullName>TIP49-homology protein 1</fullName>
    </alternativeName>
    <alternativeName>
        <fullName>TIP49a homolog</fullName>
    </alternativeName>
</protein>
<proteinExistence type="evidence at protein level"/>
<accession>Q8STP2</accession>
<name>RUVB1_ENCCU</name>
<organism>
    <name type="scientific">Encephalitozoon cuniculi (strain GB-M1)</name>
    <name type="common">Microsporidian parasite</name>
    <dbReference type="NCBI Taxonomy" id="284813"/>
    <lineage>
        <taxon>Eukaryota</taxon>
        <taxon>Fungi</taxon>
        <taxon>Fungi incertae sedis</taxon>
        <taxon>Microsporidia</taxon>
        <taxon>Unikaryonidae</taxon>
        <taxon>Encephalitozoon</taxon>
    </lineage>
</organism>